<gene>
    <name evidence="1" type="primary">dnaK</name>
    <name type="ordered locus">LSL_0578</name>
</gene>
<evidence type="ECO:0000255" key="1">
    <source>
        <dbReference type="HAMAP-Rule" id="MF_00332"/>
    </source>
</evidence>
<evidence type="ECO:0000256" key="2">
    <source>
        <dbReference type="SAM" id="MobiDB-lite"/>
    </source>
</evidence>
<accession>Q1WUE8</accession>
<reference key="1">
    <citation type="journal article" date="2006" name="Proc. Natl. Acad. Sci. U.S.A.">
        <title>Multireplicon genome architecture of Lactobacillus salivarius.</title>
        <authorList>
            <person name="Claesson M.J."/>
            <person name="Li Y."/>
            <person name="Leahy S."/>
            <person name="Canchaya C."/>
            <person name="van Pijkeren J.P."/>
            <person name="Cerdeno-Tarraga A.M."/>
            <person name="Parkhill J."/>
            <person name="Flynn S."/>
            <person name="O'Sullivan G.C."/>
            <person name="Collins J.K."/>
            <person name="Higgins D."/>
            <person name="Shanahan F."/>
            <person name="Fitzgerald G.F."/>
            <person name="van Sinderen D."/>
            <person name="O'Toole P.W."/>
        </authorList>
    </citation>
    <scope>NUCLEOTIDE SEQUENCE [LARGE SCALE GENOMIC DNA]</scope>
    <source>
        <strain>UCC118</strain>
    </source>
</reference>
<organism>
    <name type="scientific">Ligilactobacillus salivarius (strain UCC118)</name>
    <name type="common">Lactobacillus salivarius</name>
    <dbReference type="NCBI Taxonomy" id="362948"/>
    <lineage>
        <taxon>Bacteria</taxon>
        <taxon>Bacillati</taxon>
        <taxon>Bacillota</taxon>
        <taxon>Bacilli</taxon>
        <taxon>Lactobacillales</taxon>
        <taxon>Lactobacillaceae</taxon>
        <taxon>Ligilactobacillus</taxon>
    </lineage>
</organism>
<comment type="function">
    <text evidence="1">Acts as a chaperone.</text>
</comment>
<comment type="induction">
    <text evidence="1">By stress conditions e.g. heat shock.</text>
</comment>
<comment type="similarity">
    <text evidence="1">Belongs to the heat shock protein 70 family.</text>
</comment>
<proteinExistence type="inferred from homology"/>
<protein>
    <recommendedName>
        <fullName evidence="1">Chaperone protein DnaK</fullName>
    </recommendedName>
    <alternativeName>
        <fullName evidence="1">HSP70</fullName>
    </alternativeName>
    <alternativeName>
        <fullName evidence="1">Heat shock 70 kDa protein</fullName>
    </alternativeName>
    <alternativeName>
        <fullName evidence="1">Heat shock protein 70</fullName>
    </alternativeName>
</protein>
<sequence>MSKIIGIDLGTTNSAVAVLEGKDPKIITNPEGNRTTPSVVSFKNGETQVGEVAKRQAITNPNTVSSIKRHMGDANYKVKIEDKEYTPQEISAMILQYIKDYAESYLGEEVSQAVITVPAYFNDSQRQATKDAGKIAGLKVERIVNEPTAAALAYGLDKLDKDERILVFDLGGGTFDVSILELGDGVFEVLSTNGDTHLGGDDFDNKIIDWLVENFKADNGIDLSQDKMAMQRLKDAAEKAKKDLSGTTEAQISLPFIAAGEAGPLHLETSLSRAKFNELTEDLVERTKIPVRNALADAGLTNADIDEVILVGGSTRIPAVKEAVKAETGHTPNESVNPDEAVALGAAIQGGVITGDVKDVVLLDVTPLSLGIETMGGVFTKLIDRNTTIPTSKSQVFSTAADNQPAVDIHVLQGERPMAADNKTLGRFQLTDIPVAPRGVPQIEVKFDIDKNGIVNVSAKDLGTNKEQKITIKSSSGLSDEEIDRMVKEAKENEAADKKRKEEVDLRNEVDQLLFQTDKTLKEVKDKVSADEVKSVEDARDALKKAQEQSDINEMKAKKDELTKLIQDMSVKLYQQAQQAQQASGAQGDTSANNSTNDDNTVDGDFKEVDPDENK</sequence>
<keyword id="KW-0067">ATP-binding</keyword>
<keyword id="KW-0143">Chaperone</keyword>
<keyword id="KW-0547">Nucleotide-binding</keyword>
<keyword id="KW-0597">Phosphoprotein</keyword>
<keyword id="KW-1185">Reference proteome</keyword>
<keyword id="KW-0346">Stress response</keyword>
<name>DNAK_LIGS1</name>
<dbReference type="EMBL" id="CP000233">
    <property type="protein sequence ID" value="ABD99387.1"/>
    <property type="molecule type" value="Genomic_DNA"/>
</dbReference>
<dbReference type="RefSeq" id="WP_011475828.1">
    <property type="nucleotide sequence ID" value="NC_007929.1"/>
</dbReference>
<dbReference type="RefSeq" id="YP_535470.1">
    <property type="nucleotide sequence ID" value="NC_007929.1"/>
</dbReference>
<dbReference type="SMR" id="Q1WUE8"/>
<dbReference type="STRING" id="362948.LSL_0578"/>
<dbReference type="KEGG" id="lsl:LSL_0578"/>
<dbReference type="PATRIC" id="fig|362948.14.peg.657"/>
<dbReference type="HOGENOM" id="CLU_005965_2_4_9"/>
<dbReference type="OrthoDB" id="9766019at2"/>
<dbReference type="Proteomes" id="UP000006559">
    <property type="component" value="Chromosome"/>
</dbReference>
<dbReference type="GO" id="GO:0005524">
    <property type="term" value="F:ATP binding"/>
    <property type="evidence" value="ECO:0007669"/>
    <property type="project" value="UniProtKB-UniRule"/>
</dbReference>
<dbReference type="GO" id="GO:0140662">
    <property type="term" value="F:ATP-dependent protein folding chaperone"/>
    <property type="evidence" value="ECO:0007669"/>
    <property type="project" value="InterPro"/>
</dbReference>
<dbReference type="GO" id="GO:0051082">
    <property type="term" value="F:unfolded protein binding"/>
    <property type="evidence" value="ECO:0007669"/>
    <property type="project" value="InterPro"/>
</dbReference>
<dbReference type="CDD" id="cd10234">
    <property type="entry name" value="ASKHA_NBD_HSP70_DnaK-like"/>
    <property type="match status" value="1"/>
</dbReference>
<dbReference type="FunFam" id="2.60.34.10:FF:000014">
    <property type="entry name" value="Chaperone protein DnaK HSP70"/>
    <property type="match status" value="1"/>
</dbReference>
<dbReference type="FunFam" id="3.30.420.40:FF:000020">
    <property type="entry name" value="Chaperone protein HscA homolog"/>
    <property type="match status" value="1"/>
</dbReference>
<dbReference type="FunFam" id="3.30.420.40:FF:000545">
    <property type="entry name" value="Endoplasmic reticulum chaperone BiP"/>
    <property type="match status" value="1"/>
</dbReference>
<dbReference type="FunFam" id="1.20.1270.10:FF:000001">
    <property type="entry name" value="Molecular chaperone DnaK"/>
    <property type="match status" value="1"/>
</dbReference>
<dbReference type="FunFam" id="3.90.640.10:FF:000003">
    <property type="entry name" value="Molecular chaperone DnaK"/>
    <property type="match status" value="1"/>
</dbReference>
<dbReference type="Gene3D" id="1.20.1270.10">
    <property type="match status" value="1"/>
</dbReference>
<dbReference type="Gene3D" id="3.30.420.40">
    <property type="match status" value="2"/>
</dbReference>
<dbReference type="Gene3D" id="3.90.640.10">
    <property type="entry name" value="Actin, Chain A, domain 4"/>
    <property type="match status" value="1"/>
</dbReference>
<dbReference type="Gene3D" id="2.60.34.10">
    <property type="entry name" value="Substrate Binding Domain Of DNAk, Chain A, domain 1"/>
    <property type="match status" value="1"/>
</dbReference>
<dbReference type="HAMAP" id="MF_00332">
    <property type="entry name" value="DnaK"/>
    <property type="match status" value="1"/>
</dbReference>
<dbReference type="InterPro" id="IPR043129">
    <property type="entry name" value="ATPase_NBD"/>
</dbReference>
<dbReference type="InterPro" id="IPR012725">
    <property type="entry name" value="Chaperone_DnaK"/>
</dbReference>
<dbReference type="InterPro" id="IPR018181">
    <property type="entry name" value="Heat_shock_70_CS"/>
</dbReference>
<dbReference type="InterPro" id="IPR029048">
    <property type="entry name" value="HSP70_C_sf"/>
</dbReference>
<dbReference type="InterPro" id="IPR029047">
    <property type="entry name" value="HSP70_peptide-bd_sf"/>
</dbReference>
<dbReference type="InterPro" id="IPR013126">
    <property type="entry name" value="Hsp_70_fam"/>
</dbReference>
<dbReference type="NCBIfam" id="NF001413">
    <property type="entry name" value="PRK00290.1"/>
    <property type="match status" value="1"/>
</dbReference>
<dbReference type="NCBIfam" id="TIGR02350">
    <property type="entry name" value="prok_dnaK"/>
    <property type="match status" value="1"/>
</dbReference>
<dbReference type="PANTHER" id="PTHR19375">
    <property type="entry name" value="HEAT SHOCK PROTEIN 70KDA"/>
    <property type="match status" value="1"/>
</dbReference>
<dbReference type="Pfam" id="PF00012">
    <property type="entry name" value="HSP70"/>
    <property type="match status" value="1"/>
</dbReference>
<dbReference type="PRINTS" id="PR00301">
    <property type="entry name" value="HEATSHOCK70"/>
</dbReference>
<dbReference type="SUPFAM" id="SSF53067">
    <property type="entry name" value="Actin-like ATPase domain"/>
    <property type="match status" value="2"/>
</dbReference>
<dbReference type="SUPFAM" id="SSF100934">
    <property type="entry name" value="Heat shock protein 70kD (HSP70), C-terminal subdomain"/>
    <property type="match status" value="1"/>
</dbReference>
<dbReference type="SUPFAM" id="SSF100920">
    <property type="entry name" value="Heat shock protein 70kD (HSP70), peptide-binding domain"/>
    <property type="match status" value="1"/>
</dbReference>
<dbReference type="PROSITE" id="PS00297">
    <property type="entry name" value="HSP70_1"/>
    <property type="match status" value="1"/>
</dbReference>
<dbReference type="PROSITE" id="PS00329">
    <property type="entry name" value="HSP70_2"/>
    <property type="match status" value="1"/>
</dbReference>
<dbReference type="PROSITE" id="PS01036">
    <property type="entry name" value="HSP70_3"/>
    <property type="match status" value="1"/>
</dbReference>
<feature type="chain" id="PRO_1000059591" description="Chaperone protein DnaK">
    <location>
        <begin position="1"/>
        <end position="615"/>
    </location>
</feature>
<feature type="region of interest" description="Disordered" evidence="2">
    <location>
        <begin position="575"/>
        <end position="615"/>
    </location>
</feature>
<feature type="compositionally biased region" description="Low complexity" evidence="2">
    <location>
        <begin position="575"/>
        <end position="599"/>
    </location>
</feature>
<feature type="compositionally biased region" description="Basic and acidic residues" evidence="2">
    <location>
        <begin position="604"/>
        <end position="615"/>
    </location>
</feature>
<feature type="modified residue" description="Phosphothreonine; by autocatalysis" evidence="1">
    <location>
        <position position="174"/>
    </location>
</feature>